<protein>
    <recommendedName>
        <fullName evidence="1">Phosphomethylpyrimidine synthase</fullName>
        <ecNumber evidence="1">4.1.99.17</ecNumber>
    </recommendedName>
    <alternativeName>
        <fullName evidence="1">Hydroxymethylpyrimidine phosphate synthase</fullName>
        <shortName evidence="1">HMP-P synthase</shortName>
        <shortName evidence="1">HMP-phosphate synthase</shortName>
        <shortName evidence="1">HMPP synthase</shortName>
    </alternativeName>
    <alternativeName>
        <fullName evidence="1">Thiamine biosynthesis protein ThiC</fullName>
    </alternativeName>
</protein>
<comment type="function">
    <text evidence="1">Catalyzes the synthesis of the hydroxymethylpyrimidine phosphate (HMP-P) moiety of thiamine from aminoimidazole ribotide (AIR) in a radical S-adenosyl-L-methionine (SAM)-dependent reaction.</text>
</comment>
<comment type="catalytic activity">
    <reaction evidence="1">
        <text>5-amino-1-(5-phospho-beta-D-ribosyl)imidazole + S-adenosyl-L-methionine = 4-amino-2-methyl-5-(phosphooxymethyl)pyrimidine + CO + 5'-deoxyadenosine + formate + L-methionine + 3 H(+)</text>
        <dbReference type="Rhea" id="RHEA:24840"/>
        <dbReference type="ChEBI" id="CHEBI:15378"/>
        <dbReference type="ChEBI" id="CHEBI:15740"/>
        <dbReference type="ChEBI" id="CHEBI:17245"/>
        <dbReference type="ChEBI" id="CHEBI:17319"/>
        <dbReference type="ChEBI" id="CHEBI:57844"/>
        <dbReference type="ChEBI" id="CHEBI:58354"/>
        <dbReference type="ChEBI" id="CHEBI:59789"/>
        <dbReference type="ChEBI" id="CHEBI:137981"/>
        <dbReference type="EC" id="4.1.99.17"/>
    </reaction>
</comment>
<comment type="cofactor">
    <cofactor evidence="1">
        <name>[4Fe-4S] cluster</name>
        <dbReference type="ChEBI" id="CHEBI:49883"/>
    </cofactor>
    <text evidence="1">Binds 1 [4Fe-4S] cluster per subunit. The cluster is coordinated with 3 cysteines and an exchangeable S-adenosyl-L-methionine.</text>
</comment>
<comment type="pathway">
    <text evidence="1">Cofactor biosynthesis; thiamine diphosphate biosynthesis.</text>
</comment>
<comment type="similarity">
    <text evidence="1">Belongs to the ThiC family.</text>
</comment>
<reference key="1">
    <citation type="journal article" date="2001" name="DNA Res.">
        <title>Complete genomic sequence of the filamentous nitrogen-fixing cyanobacterium Anabaena sp. strain PCC 7120.</title>
        <authorList>
            <person name="Kaneko T."/>
            <person name="Nakamura Y."/>
            <person name="Wolk C.P."/>
            <person name="Kuritz T."/>
            <person name="Sasamoto S."/>
            <person name="Watanabe A."/>
            <person name="Iriguchi M."/>
            <person name="Ishikawa A."/>
            <person name="Kawashima K."/>
            <person name="Kimura T."/>
            <person name="Kishida Y."/>
            <person name="Kohara M."/>
            <person name="Matsumoto M."/>
            <person name="Matsuno A."/>
            <person name="Muraki A."/>
            <person name="Nakazaki N."/>
            <person name="Shimpo S."/>
            <person name="Sugimoto M."/>
            <person name="Takazawa M."/>
            <person name="Yamada M."/>
            <person name="Yasuda M."/>
            <person name="Tabata S."/>
        </authorList>
    </citation>
    <scope>NUCLEOTIDE SEQUENCE [LARGE SCALE GENOMIC DNA]</scope>
    <source>
        <strain>PCC 7120 / SAG 25.82 / UTEX 2576</strain>
    </source>
</reference>
<feature type="chain" id="PRO_0000152779" description="Phosphomethylpyrimidine synthase">
    <location>
        <begin position="1"/>
        <end position="457"/>
    </location>
</feature>
<feature type="binding site" evidence="1">
    <location>
        <position position="80"/>
    </location>
    <ligand>
        <name>substrate</name>
    </ligand>
</feature>
<feature type="binding site" evidence="1">
    <location>
        <position position="109"/>
    </location>
    <ligand>
        <name>substrate</name>
    </ligand>
</feature>
<feature type="binding site" evidence="1">
    <location>
        <position position="139"/>
    </location>
    <ligand>
        <name>substrate</name>
    </ligand>
</feature>
<feature type="binding site" evidence="1">
    <location>
        <position position="175"/>
    </location>
    <ligand>
        <name>substrate</name>
    </ligand>
</feature>
<feature type="binding site" evidence="1">
    <location>
        <begin position="195"/>
        <end position="197"/>
    </location>
    <ligand>
        <name>substrate</name>
    </ligand>
</feature>
<feature type="binding site" evidence="1">
    <location>
        <begin position="236"/>
        <end position="239"/>
    </location>
    <ligand>
        <name>substrate</name>
    </ligand>
</feature>
<feature type="binding site" evidence="1">
    <location>
        <position position="275"/>
    </location>
    <ligand>
        <name>substrate</name>
    </ligand>
</feature>
<feature type="binding site" evidence="1">
    <location>
        <position position="279"/>
    </location>
    <ligand>
        <name>Zn(2+)</name>
        <dbReference type="ChEBI" id="CHEBI:29105"/>
    </ligand>
</feature>
<feature type="binding site" evidence="1">
    <location>
        <position position="302"/>
    </location>
    <ligand>
        <name>substrate</name>
    </ligand>
</feature>
<feature type="binding site" evidence="1">
    <location>
        <position position="343"/>
    </location>
    <ligand>
        <name>Zn(2+)</name>
        <dbReference type="ChEBI" id="CHEBI:29105"/>
    </ligand>
</feature>
<feature type="binding site" evidence="1">
    <location>
        <position position="423"/>
    </location>
    <ligand>
        <name>[4Fe-4S] cluster</name>
        <dbReference type="ChEBI" id="CHEBI:49883"/>
        <note>4Fe-4S-S-AdoMet</note>
    </ligand>
</feature>
<feature type="binding site" evidence="1">
    <location>
        <position position="426"/>
    </location>
    <ligand>
        <name>[4Fe-4S] cluster</name>
        <dbReference type="ChEBI" id="CHEBI:49883"/>
        <note>4Fe-4S-S-AdoMet</note>
    </ligand>
</feature>
<feature type="binding site" evidence="1">
    <location>
        <position position="431"/>
    </location>
    <ligand>
        <name>[4Fe-4S] cluster</name>
        <dbReference type="ChEBI" id="CHEBI:49883"/>
        <note>4Fe-4S-S-AdoMet</note>
    </ligand>
</feature>
<keyword id="KW-0004">4Fe-4S</keyword>
<keyword id="KW-0408">Iron</keyword>
<keyword id="KW-0411">Iron-sulfur</keyword>
<keyword id="KW-0456">Lyase</keyword>
<keyword id="KW-0479">Metal-binding</keyword>
<keyword id="KW-1185">Reference proteome</keyword>
<keyword id="KW-0949">S-adenosyl-L-methionine</keyword>
<keyword id="KW-0784">Thiamine biosynthesis</keyword>
<keyword id="KW-0862">Zinc</keyword>
<name>THIC_NOSS1</name>
<proteinExistence type="inferred from homology"/>
<organism>
    <name type="scientific">Nostoc sp. (strain PCC 7120 / SAG 25.82 / UTEX 2576)</name>
    <dbReference type="NCBI Taxonomy" id="103690"/>
    <lineage>
        <taxon>Bacteria</taxon>
        <taxon>Bacillati</taxon>
        <taxon>Cyanobacteriota</taxon>
        <taxon>Cyanophyceae</taxon>
        <taxon>Nostocales</taxon>
        <taxon>Nostocaceae</taxon>
        <taxon>Nostoc</taxon>
    </lineage>
</organism>
<sequence>MRTEWVAKRRGQGNVTQMHYARQGVITEEMQYVARRENLPADLIREEVARGRMIIPANINHTNLEPMAIGIASKCKVNANIGASPNSSNLQEEVDKLNLAVKYGADTVMDLSTGGGNLDEIRTAIINASPVPIGTVPVYQALESVHGTIENLTPDDFLHIIEKHAQQGVDYQTIHAGILIEHLPLVRSRITGIVSRGGGILARWMLHHHKQNPLYTHFGDIIEIFKRYDVSFSLGDSLRPGCTHDASDDAQLAELKTLGQLTRKAWEHDVQVMVEGPGHVPMDQIEFNVKKQMEECSEAPFYVLGPLVTDIAPGYDHITSAIGAAMAGWYGTAMLCYVTPKEHLGLPNAEDVRNGLIAYKIAAHAADIARHRPGARDRDDELSKARYNFDWNRQFELSLDPERAKEYHDETLPADIYKTAEFCSMCGPKFCPMQTKVDADALTELEKFLAKEPVTQG</sequence>
<gene>
    <name evidence="1" type="primary">thiC</name>
    <name type="ordered locus">all0982</name>
</gene>
<evidence type="ECO:0000255" key="1">
    <source>
        <dbReference type="HAMAP-Rule" id="MF_00089"/>
    </source>
</evidence>
<dbReference type="EC" id="4.1.99.17" evidence="1"/>
<dbReference type="EMBL" id="BA000019">
    <property type="protein sequence ID" value="BAB72939.1"/>
    <property type="molecule type" value="Genomic_DNA"/>
</dbReference>
<dbReference type="PIR" id="AC1929">
    <property type="entry name" value="AC1929"/>
</dbReference>
<dbReference type="RefSeq" id="WP_010995156.1">
    <property type="nucleotide sequence ID" value="NZ_RSCN01000025.1"/>
</dbReference>
<dbReference type="SMR" id="Q8YY69"/>
<dbReference type="STRING" id="103690.gene:10492996"/>
<dbReference type="KEGG" id="ana:all0982"/>
<dbReference type="eggNOG" id="COG0422">
    <property type="taxonomic scope" value="Bacteria"/>
</dbReference>
<dbReference type="OrthoDB" id="9805897at2"/>
<dbReference type="UniPathway" id="UPA00060"/>
<dbReference type="Proteomes" id="UP000002483">
    <property type="component" value="Chromosome"/>
</dbReference>
<dbReference type="GO" id="GO:0005829">
    <property type="term" value="C:cytosol"/>
    <property type="evidence" value="ECO:0007669"/>
    <property type="project" value="TreeGrafter"/>
</dbReference>
<dbReference type="GO" id="GO:0051539">
    <property type="term" value="F:4 iron, 4 sulfur cluster binding"/>
    <property type="evidence" value="ECO:0007669"/>
    <property type="project" value="UniProtKB-KW"/>
</dbReference>
<dbReference type="GO" id="GO:0016830">
    <property type="term" value="F:carbon-carbon lyase activity"/>
    <property type="evidence" value="ECO:0007669"/>
    <property type="project" value="InterPro"/>
</dbReference>
<dbReference type="GO" id="GO:0008270">
    <property type="term" value="F:zinc ion binding"/>
    <property type="evidence" value="ECO:0007669"/>
    <property type="project" value="UniProtKB-UniRule"/>
</dbReference>
<dbReference type="GO" id="GO:0009228">
    <property type="term" value="P:thiamine biosynthetic process"/>
    <property type="evidence" value="ECO:0007669"/>
    <property type="project" value="UniProtKB-KW"/>
</dbReference>
<dbReference type="GO" id="GO:0009229">
    <property type="term" value="P:thiamine diphosphate biosynthetic process"/>
    <property type="evidence" value="ECO:0007669"/>
    <property type="project" value="UniProtKB-UniRule"/>
</dbReference>
<dbReference type="FunFam" id="3.20.20.540:FF:000001">
    <property type="entry name" value="Phosphomethylpyrimidine synthase"/>
    <property type="match status" value="1"/>
</dbReference>
<dbReference type="Gene3D" id="6.10.250.620">
    <property type="match status" value="1"/>
</dbReference>
<dbReference type="Gene3D" id="3.20.20.540">
    <property type="entry name" value="Radical SAM ThiC family, central domain"/>
    <property type="match status" value="1"/>
</dbReference>
<dbReference type="HAMAP" id="MF_00089">
    <property type="entry name" value="ThiC"/>
    <property type="match status" value="1"/>
</dbReference>
<dbReference type="InterPro" id="IPR037509">
    <property type="entry name" value="ThiC"/>
</dbReference>
<dbReference type="InterPro" id="IPR038521">
    <property type="entry name" value="ThiC/Bza_core_dom"/>
</dbReference>
<dbReference type="InterPro" id="IPR002817">
    <property type="entry name" value="ThiC/BzaA/B"/>
</dbReference>
<dbReference type="NCBIfam" id="NF006763">
    <property type="entry name" value="PRK09284.1"/>
    <property type="match status" value="1"/>
</dbReference>
<dbReference type="NCBIfam" id="NF009895">
    <property type="entry name" value="PRK13352.1"/>
    <property type="match status" value="1"/>
</dbReference>
<dbReference type="NCBIfam" id="TIGR00190">
    <property type="entry name" value="thiC"/>
    <property type="match status" value="1"/>
</dbReference>
<dbReference type="PANTHER" id="PTHR30557:SF1">
    <property type="entry name" value="PHOSPHOMETHYLPYRIMIDINE SYNTHASE, CHLOROPLASTIC"/>
    <property type="match status" value="1"/>
</dbReference>
<dbReference type="PANTHER" id="PTHR30557">
    <property type="entry name" value="THIAMINE BIOSYNTHESIS PROTEIN THIC"/>
    <property type="match status" value="1"/>
</dbReference>
<dbReference type="Pfam" id="PF01964">
    <property type="entry name" value="ThiC_Rad_SAM"/>
    <property type="match status" value="1"/>
</dbReference>
<dbReference type="SFLD" id="SFLDF00407">
    <property type="entry name" value="phosphomethylpyrimidine_syntha"/>
    <property type="match status" value="1"/>
</dbReference>
<dbReference type="SFLD" id="SFLDG01114">
    <property type="entry name" value="phosphomethylpyrimidine_syntha"/>
    <property type="match status" value="1"/>
</dbReference>
<dbReference type="SFLD" id="SFLDS00113">
    <property type="entry name" value="Radical_SAM_Phosphomethylpyrim"/>
    <property type="match status" value="1"/>
</dbReference>
<accession>Q8YY69</accession>